<protein>
    <recommendedName>
        <fullName>Uncharacterized protein YbzI</fullName>
    </recommendedName>
</protein>
<keyword id="KW-1185">Reference proteome</keyword>
<dbReference type="EMBL" id="AL009126">
    <property type="protein sequence ID" value="CAX52542.1"/>
    <property type="molecule type" value="Genomic_DNA"/>
</dbReference>
<dbReference type="RefSeq" id="WP_009966423.1">
    <property type="nucleotide sequence ID" value="NZ_OZ025638.1"/>
</dbReference>
<dbReference type="RefSeq" id="YP_003097672.1">
    <property type="nucleotide sequence ID" value="NC_000964.3"/>
</dbReference>
<dbReference type="STRING" id="224308.BSU02019"/>
<dbReference type="PaxDb" id="224308-BSU02019"/>
<dbReference type="EnsemblBacteria" id="CAX52542">
    <property type="protein sequence ID" value="CAX52542"/>
    <property type="gene ID" value="BSU_02019"/>
</dbReference>
<dbReference type="GeneID" id="8303143"/>
<dbReference type="KEGG" id="bsu:BSU02019"/>
<dbReference type="PATRIC" id="fig|224308.179.peg.208"/>
<dbReference type="InParanoid" id="C0H3T1"/>
<dbReference type="OrthoDB" id="2940117at2"/>
<dbReference type="BioCyc" id="BSUB:BSU02019-MONOMER"/>
<dbReference type="Proteomes" id="UP000001570">
    <property type="component" value="Chromosome"/>
</dbReference>
<feature type="chain" id="PRO_0000382204" description="Uncharacterized protein YbzI">
    <location>
        <begin position="1"/>
        <end position="87"/>
    </location>
</feature>
<organism>
    <name type="scientific">Bacillus subtilis (strain 168)</name>
    <dbReference type="NCBI Taxonomy" id="224308"/>
    <lineage>
        <taxon>Bacteria</taxon>
        <taxon>Bacillati</taxon>
        <taxon>Bacillota</taxon>
        <taxon>Bacilli</taxon>
        <taxon>Bacillales</taxon>
        <taxon>Bacillaceae</taxon>
        <taxon>Bacillus</taxon>
    </lineage>
</organism>
<proteinExistence type="predicted"/>
<reference key="1">
    <citation type="journal article" date="1997" name="Nature">
        <title>The complete genome sequence of the Gram-positive bacterium Bacillus subtilis.</title>
        <authorList>
            <person name="Kunst F."/>
            <person name="Ogasawara N."/>
            <person name="Moszer I."/>
            <person name="Albertini A.M."/>
            <person name="Alloni G."/>
            <person name="Azevedo V."/>
            <person name="Bertero M.G."/>
            <person name="Bessieres P."/>
            <person name="Bolotin A."/>
            <person name="Borchert S."/>
            <person name="Borriss R."/>
            <person name="Boursier L."/>
            <person name="Brans A."/>
            <person name="Braun M."/>
            <person name="Brignell S.C."/>
            <person name="Bron S."/>
            <person name="Brouillet S."/>
            <person name="Bruschi C.V."/>
            <person name="Caldwell B."/>
            <person name="Capuano V."/>
            <person name="Carter N.M."/>
            <person name="Choi S.-K."/>
            <person name="Codani J.-J."/>
            <person name="Connerton I.F."/>
            <person name="Cummings N.J."/>
            <person name="Daniel R.A."/>
            <person name="Denizot F."/>
            <person name="Devine K.M."/>
            <person name="Duesterhoeft A."/>
            <person name="Ehrlich S.D."/>
            <person name="Emmerson P.T."/>
            <person name="Entian K.-D."/>
            <person name="Errington J."/>
            <person name="Fabret C."/>
            <person name="Ferrari E."/>
            <person name="Foulger D."/>
            <person name="Fritz C."/>
            <person name="Fujita M."/>
            <person name="Fujita Y."/>
            <person name="Fuma S."/>
            <person name="Galizzi A."/>
            <person name="Galleron N."/>
            <person name="Ghim S.-Y."/>
            <person name="Glaser P."/>
            <person name="Goffeau A."/>
            <person name="Golightly E.J."/>
            <person name="Grandi G."/>
            <person name="Guiseppi G."/>
            <person name="Guy B.J."/>
            <person name="Haga K."/>
            <person name="Haiech J."/>
            <person name="Harwood C.R."/>
            <person name="Henaut A."/>
            <person name="Hilbert H."/>
            <person name="Holsappel S."/>
            <person name="Hosono S."/>
            <person name="Hullo M.-F."/>
            <person name="Itaya M."/>
            <person name="Jones L.-M."/>
            <person name="Joris B."/>
            <person name="Karamata D."/>
            <person name="Kasahara Y."/>
            <person name="Klaerr-Blanchard M."/>
            <person name="Klein C."/>
            <person name="Kobayashi Y."/>
            <person name="Koetter P."/>
            <person name="Koningstein G."/>
            <person name="Krogh S."/>
            <person name="Kumano M."/>
            <person name="Kurita K."/>
            <person name="Lapidus A."/>
            <person name="Lardinois S."/>
            <person name="Lauber J."/>
            <person name="Lazarevic V."/>
            <person name="Lee S.-M."/>
            <person name="Levine A."/>
            <person name="Liu H."/>
            <person name="Masuda S."/>
            <person name="Mauel C."/>
            <person name="Medigue C."/>
            <person name="Medina N."/>
            <person name="Mellado R.P."/>
            <person name="Mizuno M."/>
            <person name="Moestl D."/>
            <person name="Nakai S."/>
            <person name="Noback M."/>
            <person name="Noone D."/>
            <person name="O'Reilly M."/>
            <person name="Ogawa K."/>
            <person name="Ogiwara A."/>
            <person name="Oudega B."/>
            <person name="Park S.-H."/>
            <person name="Parro V."/>
            <person name="Pohl T.M."/>
            <person name="Portetelle D."/>
            <person name="Porwollik S."/>
            <person name="Prescott A.M."/>
            <person name="Presecan E."/>
            <person name="Pujic P."/>
            <person name="Purnelle B."/>
            <person name="Rapoport G."/>
            <person name="Rey M."/>
            <person name="Reynolds S."/>
            <person name="Rieger M."/>
            <person name="Rivolta C."/>
            <person name="Rocha E."/>
            <person name="Roche B."/>
            <person name="Rose M."/>
            <person name="Sadaie Y."/>
            <person name="Sato T."/>
            <person name="Scanlan E."/>
            <person name="Schleich S."/>
            <person name="Schroeter R."/>
            <person name="Scoffone F."/>
            <person name="Sekiguchi J."/>
            <person name="Sekowska A."/>
            <person name="Seror S.J."/>
            <person name="Serror P."/>
            <person name="Shin B.-S."/>
            <person name="Soldo B."/>
            <person name="Sorokin A."/>
            <person name="Tacconi E."/>
            <person name="Takagi T."/>
            <person name="Takahashi H."/>
            <person name="Takemaru K."/>
            <person name="Takeuchi M."/>
            <person name="Tamakoshi A."/>
            <person name="Tanaka T."/>
            <person name="Terpstra P."/>
            <person name="Tognoni A."/>
            <person name="Tosato V."/>
            <person name="Uchiyama S."/>
            <person name="Vandenbol M."/>
            <person name="Vannier F."/>
            <person name="Vassarotti A."/>
            <person name="Viari A."/>
            <person name="Wambutt R."/>
            <person name="Wedler E."/>
            <person name="Wedler H."/>
            <person name="Weitzenegger T."/>
            <person name="Winters P."/>
            <person name="Wipat A."/>
            <person name="Yamamoto H."/>
            <person name="Yamane K."/>
            <person name="Yasumoto K."/>
            <person name="Yata K."/>
            <person name="Yoshida K."/>
            <person name="Yoshikawa H.-F."/>
            <person name="Zumstein E."/>
            <person name="Yoshikawa H."/>
            <person name="Danchin A."/>
        </authorList>
    </citation>
    <scope>NUCLEOTIDE SEQUENCE [LARGE SCALE GENOMIC DNA]</scope>
    <source>
        <strain>168</strain>
    </source>
</reference>
<gene>
    <name type="primary">ybzI</name>
    <name type="ordered locus">BSU02019</name>
</gene>
<sequence>MNIICLKKSSKRLSTSQAVLVTDIADTGITAAAGADIIAATAAVRAKEDTTTVMAAVIVTNAGATAAVNPKKVLVPLLGQGFFYVTD</sequence>
<accession>C0H3T1</accession>
<name>YBZI_BACSU</name>